<gene>
    <name evidence="2" type="primary">cas2</name>
    <name type="ordered locus">MT2883</name>
</gene>
<comment type="function">
    <text evidence="1 2">CRISPR (clustered regularly interspaced short palindromic repeat), is an adaptive immune system that provides protection against mobile genetic elements (viruses, transposable elements and conjugative plasmids). CRISPR clusters contain sequences complementary to antecedent mobile elements and target invading nucleic acids. CRISPR clusters are transcribed and processed into CRISPR RNA (crRNA). Functions as a ssRNA-specific endoribonuclease. Involved in the integration of spacer DNA into the CRISPR cassette (By similarity). The type III-A Csm effector complex binds crRNA and acts as a crRNA-guided RNase, DNase and cyclic oligoadenylate synthase; binding of target RNA cognate to the crRNA is required for all activities (By similarity).</text>
</comment>
<comment type="cofactor">
    <cofactor evidence="2">
        <name>Mg(2+)</name>
        <dbReference type="ChEBI" id="CHEBI:18420"/>
    </cofactor>
</comment>
<comment type="subunit">
    <text evidence="2">Homodimer, forms a heterotetramer with a Cas1 homodimer.</text>
</comment>
<comment type="miscellaneous">
    <text evidence="3">Encoded in a type III-A CRISPR locus.</text>
</comment>
<comment type="similarity">
    <text evidence="2">Belongs to the CRISPR-associated endoribonuclease Cas2 protein family.</text>
</comment>
<organism>
    <name type="scientific">Mycobacterium tuberculosis (strain CDC 1551 / Oshkosh)</name>
    <dbReference type="NCBI Taxonomy" id="83331"/>
    <lineage>
        <taxon>Bacteria</taxon>
        <taxon>Bacillati</taxon>
        <taxon>Actinomycetota</taxon>
        <taxon>Actinomycetes</taxon>
        <taxon>Mycobacteriales</taxon>
        <taxon>Mycobacteriaceae</taxon>
        <taxon>Mycobacterium</taxon>
        <taxon>Mycobacterium tuberculosis complex</taxon>
    </lineage>
</organism>
<proteinExistence type="inferred from homology"/>
<accession>P9WPJ2</accession>
<accession>F2GLB8</accession>
<accession>L0TAY6</accession>
<accession>P71637</accession>
<accession>Q7D6I8</accession>
<dbReference type="EC" id="3.1.-.-" evidence="2"/>
<dbReference type="EMBL" id="AE000516">
    <property type="protein sequence ID" value="AAK47208.1"/>
    <property type="molecule type" value="Genomic_DNA"/>
</dbReference>
<dbReference type="PIR" id="C70691">
    <property type="entry name" value="C70691"/>
</dbReference>
<dbReference type="RefSeq" id="WP_003414276.1">
    <property type="nucleotide sequence ID" value="NZ_KK341227.1"/>
</dbReference>
<dbReference type="SMR" id="P9WPJ2"/>
<dbReference type="KEGG" id="mtc:MT2883"/>
<dbReference type="PATRIC" id="fig|83331.31.peg.3112"/>
<dbReference type="HOGENOM" id="CLU_161124_3_2_11"/>
<dbReference type="Proteomes" id="UP000001020">
    <property type="component" value="Chromosome"/>
</dbReference>
<dbReference type="GO" id="GO:0046872">
    <property type="term" value="F:metal ion binding"/>
    <property type="evidence" value="ECO:0007669"/>
    <property type="project" value="UniProtKB-UniRule"/>
</dbReference>
<dbReference type="GO" id="GO:0004521">
    <property type="term" value="F:RNA endonuclease activity"/>
    <property type="evidence" value="ECO:0007669"/>
    <property type="project" value="InterPro"/>
</dbReference>
<dbReference type="GO" id="GO:0051607">
    <property type="term" value="P:defense response to virus"/>
    <property type="evidence" value="ECO:0007669"/>
    <property type="project" value="UniProtKB-UniRule"/>
</dbReference>
<dbReference type="GO" id="GO:0043571">
    <property type="term" value="P:maintenance of CRISPR repeat elements"/>
    <property type="evidence" value="ECO:0007669"/>
    <property type="project" value="UniProtKB-UniRule"/>
</dbReference>
<dbReference type="CDD" id="cd09638">
    <property type="entry name" value="Cas2_I_II_III"/>
    <property type="match status" value="1"/>
</dbReference>
<dbReference type="Gene3D" id="3.30.70.240">
    <property type="match status" value="1"/>
</dbReference>
<dbReference type="HAMAP" id="MF_01471">
    <property type="entry name" value="Cas2"/>
    <property type="match status" value="1"/>
</dbReference>
<dbReference type="InterPro" id="IPR021127">
    <property type="entry name" value="CRISPR_associated_Cas2"/>
</dbReference>
<dbReference type="InterPro" id="IPR019199">
    <property type="entry name" value="Virulence_VapD/CRISPR_Cas2"/>
</dbReference>
<dbReference type="NCBIfam" id="TIGR01573">
    <property type="entry name" value="cas2"/>
    <property type="match status" value="1"/>
</dbReference>
<dbReference type="PANTHER" id="PTHR34405">
    <property type="entry name" value="CRISPR-ASSOCIATED ENDORIBONUCLEASE CAS2"/>
    <property type="match status" value="1"/>
</dbReference>
<dbReference type="PANTHER" id="PTHR34405:SF3">
    <property type="entry name" value="CRISPR-ASSOCIATED ENDORIBONUCLEASE CAS2 3"/>
    <property type="match status" value="1"/>
</dbReference>
<dbReference type="Pfam" id="PF09827">
    <property type="entry name" value="CRISPR_Cas2"/>
    <property type="match status" value="1"/>
</dbReference>
<dbReference type="SUPFAM" id="SSF143430">
    <property type="entry name" value="TTP0101/SSO1404-like"/>
    <property type="match status" value="1"/>
</dbReference>
<evidence type="ECO:0000250" key="1">
    <source>
        <dbReference type="UniProtKB" id="P9WPJ3"/>
    </source>
</evidence>
<evidence type="ECO:0000255" key="2">
    <source>
        <dbReference type="HAMAP-Rule" id="MF_01471"/>
    </source>
</evidence>
<evidence type="ECO:0000305" key="3"/>
<protein>
    <recommendedName>
        <fullName evidence="2">CRISPR-associated endoribonuclease Cas2</fullName>
        <ecNumber evidence="2">3.1.-.-</ecNumber>
    </recommendedName>
</protein>
<keyword id="KW-0051">Antiviral defense</keyword>
<keyword id="KW-0255">Endonuclease</keyword>
<keyword id="KW-0378">Hydrolase</keyword>
<keyword id="KW-0460">Magnesium</keyword>
<keyword id="KW-0479">Metal-binding</keyword>
<keyword id="KW-0540">Nuclease</keyword>
<keyword id="KW-1185">Reference proteome</keyword>
<reference key="1">
    <citation type="journal article" date="2002" name="J. Bacteriol.">
        <title>Whole-genome comparison of Mycobacterium tuberculosis clinical and laboratory strains.</title>
        <authorList>
            <person name="Fleischmann R.D."/>
            <person name="Alland D."/>
            <person name="Eisen J.A."/>
            <person name="Carpenter L."/>
            <person name="White O."/>
            <person name="Peterson J.D."/>
            <person name="DeBoy R.T."/>
            <person name="Dodson R.J."/>
            <person name="Gwinn M.L."/>
            <person name="Haft D.H."/>
            <person name="Hickey E.K."/>
            <person name="Kolonay J.F."/>
            <person name="Nelson W.C."/>
            <person name="Umayam L.A."/>
            <person name="Ermolaeva M.D."/>
            <person name="Salzberg S.L."/>
            <person name="Delcher A."/>
            <person name="Utterback T.R."/>
            <person name="Weidman J.F."/>
            <person name="Khouri H.M."/>
            <person name="Gill J."/>
            <person name="Mikula A."/>
            <person name="Bishai W."/>
            <person name="Jacobs W.R. Jr."/>
            <person name="Venter J.C."/>
            <person name="Fraser C.M."/>
        </authorList>
    </citation>
    <scope>NUCLEOTIDE SEQUENCE [LARGE SCALE GENOMIC DNA]</scope>
    <source>
        <strain>CDC 1551 / Oshkosh</strain>
    </source>
</reference>
<sequence>MPTRSREEYFNLPLKVDESSGTIGKMFVLVIYDISDNRRRASLAKILAGFGYRVQESAFEAMLTKGQLAKLVARIDRFAIDCDNIRIYKIRGVAAVTFYGRGRLVSAEEFVFF</sequence>
<name>CAS2_MYCTO</name>
<feature type="chain" id="PRO_0000426942" description="CRISPR-associated endoribonuclease Cas2">
    <location>
        <begin position="1"/>
        <end position="113"/>
    </location>
</feature>
<feature type="binding site" evidence="2">
    <location>
        <position position="33"/>
    </location>
    <ligand>
        <name>Mg(2+)</name>
        <dbReference type="ChEBI" id="CHEBI:18420"/>
        <note>catalytic</note>
    </ligand>
</feature>